<sequence length="373" mass="42387">MSGLHRSSSSSKNIGNCLPSKELLDDLCSRFVLNVPEEDQQSFERILFLVEYAYWYYEDNAVENDPKLKSLSLKEFTSLLFNSCDVLRPYVTHIDDIFKDFTSYKCRVPVTGAIILDETYERCLLVKGWKGSSWSFPRGKKSKDEEDHACAIREVLEETGFDVSKLLKREEYIEFVFRQQRVRLYIVAGVTEDTVFAPLTKKEISEITWHRLDHLQPASNEVITHGVSGLKLYMVAPFLSSLKSWILKHPSPVARRPNKPLKALCVWNARTSVGGNGTATVESQNRKSELRTTTMESNSRKPELKRTTMESHSTKPELRKGTMESHNTTATVESHNTKPVVDHSQDIKPGGSFINFKFNQSVILQALESGNSA</sequence>
<dbReference type="EC" id="3.6.1.62" evidence="7"/>
<dbReference type="EMBL" id="AB006704">
    <property type="protein sequence ID" value="BAB08683.1"/>
    <property type="status" value="ALT_SEQ"/>
    <property type="molecule type" value="Genomic_DNA"/>
</dbReference>
<dbReference type="EMBL" id="CP002688">
    <property type="protein sequence ID" value="AED91912.1"/>
    <property type="molecule type" value="Genomic_DNA"/>
</dbReference>
<dbReference type="EMBL" id="CP002688">
    <property type="protein sequence ID" value="AED91913.1"/>
    <property type="molecule type" value="Genomic_DNA"/>
</dbReference>
<dbReference type="EMBL" id="AK119112">
    <property type="protein sequence ID" value="BAC43684.1"/>
    <property type="molecule type" value="mRNA"/>
</dbReference>
<dbReference type="EMBL" id="BT005332">
    <property type="protein sequence ID" value="AAO63396.1"/>
    <property type="molecule type" value="mRNA"/>
</dbReference>
<dbReference type="RefSeq" id="NP_001190304.1">
    <molecule id="Q8GW31-2"/>
    <property type="nucleotide sequence ID" value="NM_001203375.1"/>
</dbReference>
<dbReference type="RefSeq" id="NP_196861.2">
    <molecule id="Q8GW31-1"/>
    <property type="nucleotide sequence ID" value="NM_121360.4"/>
</dbReference>
<dbReference type="SMR" id="Q8GW31"/>
<dbReference type="BioGRID" id="16479">
    <property type="interactions" value="4"/>
</dbReference>
<dbReference type="FunCoup" id="Q8GW31">
    <property type="interactions" value="3510"/>
</dbReference>
<dbReference type="IntAct" id="Q8GW31">
    <property type="interactions" value="3"/>
</dbReference>
<dbReference type="MINT" id="Q8GW31"/>
<dbReference type="STRING" id="3702.Q8GW31"/>
<dbReference type="iPTMnet" id="Q8GW31"/>
<dbReference type="PaxDb" id="3702-AT5G13570.2"/>
<dbReference type="ProteomicsDB" id="224691">
    <molecule id="Q8GW31-1"/>
</dbReference>
<dbReference type="EnsemblPlants" id="AT5G13570.1">
    <molecule id="Q8GW31-1"/>
    <property type="protein sequence ID" value="AT5G13570.1"/>
    <property type="gene ID" value="AT5G13570"/>
</dbReference>
<dbReference type="EnsemblPlants" id="AT5G13570.2">
    <molecule id="Q8GW31-2"/>
    <property type="protein sequence ID" value="AT5G13570.2"/>
    <property type="gene ID" value="AT5G13570"/>
</dbReference>
<dbReference type="GeneID" id="831201"/>
<dbReference type="Gramene" id="AT5G13570.1">
    <molecule id="Q8GW31-1"/>
    <property type="protein sequence ID" value="AT5G13570.1"/>
    <property type="gene ID" value="AT5G13570"/>
</dbReference>
<dbReference type="Gramene" id="AT5G13570.2">
    <molecule id="Q8GW31-2"/>
    <property type="protein sequence ID" value="AT5G13570.2"/>
    <property type="gene ID" value="AT5G13570"/>
</dbReference>
<dbReference type="KEGG" id="ath:AT5G13570"/>
<dbReference type="Araport" id="AT5G13570"/>
<dbReference type="TAIR" id="AT5G13570">
    <property type="gene designation" value="DCP2"/>
</dbReference>
<dbReference type="eggNOG" id="KOG2937">
    <property type="taxonomic scope" value="Eukaryota"/>
</dbReference>
<dbReference type="InParanoid" id="Q8GW31"/>
<dbReference type="OMA" id="RARCVWN"/>
<dbReference type="OrthoDB" id="18996at2759"/>
<dbReference type="PhylomeDB" id="Q8GW31"/>
<dbReference type="CD-CODE" id="60F64496">
    <property type="entry name" value="P-body"/>
</dbReference>
<dbReference type="PRO" id="PR:Q8GW31"/>
<dbReference type="Proteomes" id="UP000006548">
    <property type="component" value="Chromosome 5"/>
</dbReference>
<dbReference type="ExpressionAtlas" id="Q8GW31">
    <property type="expression patterns" value="baseline and differential"/>
</dbReference>
<dbReference type="GO" id="GO:0005737">
    <property type="term" value="C:cytoplasm"/>
    <property type="evidence" value="ECO:0000314"/>
    <property type="project" value="TAIR"/>
</dbReference>
<dbReference type="GO" id="GO:0000932">
    <property type="term" value="C:P-body"/>
    <property type="evidence" value="ECO:0000314"/>
    <property type="project" value="TAIR"/>
</dbReference>
<dbReference type="GO" id="GO:0140933">
    <property type="term" value="F:5'-(N(7)-methylguanosine 5'-triphospho)-[mRNA] hydrolase activity"/>
    <property type="evidence" value="ECO:0007669"/>
    <property type="project" value="UniProtKB-EC"/>
</dbReference>
<dbReference type="GO" id="GO:0005524">
    <property type="term" value="F:ATP binding"/>
    <property type="evidence" value="ECO:0007669"/>
    <property type="project" value="UniProtKB-KW"/>
</dbReference>
<dbReference type="GO" id="GO:0000287">
    <property type="term" value="F:magnesium ion binding"/>
    <property type="evidence" value="ECO:0000314"/>
    <property type="project" value="UniProtKB"/>
</dbReference>
<dbReference type="GO" id="GO:0030145">
    <property type="term" value="F:manganese ion binding"/>
    <property type="evidence" value="ECO:0000314"/>
    <property type="project" value="UniProtKB"/>
</dbReference>
<dbReference type="GO" id="GO:0003729">
    <property type="term" value="F:mRNA binding"/>
    <property type="evidence" value="ECO:0000314"/>
    <property type="project" value="TAIR"/>
</dbReference>
<dbReference type="GO" id="GO:0042803">
    <property type="term" value="F:protein homodimerization activity"/>
    <property type="evidence" value="ECO:0000353"/>
    <property type="project" value="TAIR"/>
</dbReference>
<dbReference type="GO" id="GO:0000290">
    <property type="term" value="P:deadenylation-dependent decapping of nuclear-transcribed mRNA"/>
    <property type="evidence" value="ECO:0007669"/>
    <property type="project" value="InterPro"/>
</dbReference>
<dbReference type="GO" id="GO:0031087">
    <property type="term" value="P:deadenylation-independent decapping of nuclear-transcribed mRNA"/>
    <property type="evidence" value="ECO:0000314"/>
    <property type="project" value="TAIR"/>
</dbReference>
<dbReference type="GO" id="GO:0006402">
    <property type="term" value="P:mRNA catabolic process"/>
    <property type="evidence" value="ECO:0000315"/>
    <property type="project" value="TAIR"/>
</dbReference>
<dbReference type="GO" id="GO:0006397">
    <property type="term" value="P:mRNA processing"/>
    <property type="evidence" value="ECO:0007669"/>
    <property type="project" value="UniProtKB-KW"/>
</dbReference>
<dbReference type="GO" id="GO:0000184">
    <property type="term" value="P:nuclear-transcribed mRNA catabolic process, nonsense-mediated decay"/>
    <property type="evidence" value="ECO:0007669"/>
    <property type="project" value="InterPro"/>
</dbReference>
<dbReference type="GO" id="GO:0009791">
    <property type="term" value="P:post-embryonic development"/>
    <property type="evidence" value="ECO:0000315"/>
    <property type="project" value="UniProtKB"/>
</dbReference>
<dbReference type="GO" id="GO:0016441">
    <property type="term" value="P:post-transcriptional gene silencing"/>
    <property type="evidence" value="ECO:0000315"/>
    <property type="project" value="TAIR"/>
</dbReference>
<dbReference type="GO" id="GO:0010072">
    <property type="term" value="P:primary shoot apical meristem specification"/>
    <property type="evidence" value="ECO:0000315"/>
    <property type="project" value="UniProtKB"/>
</dbReference>
<dbReference type="CDD" id="cd03672">
    <property type="entry name" value="NUDIX_Dcp2p_Nudt20"/>
    <property type="match status" value="1"/>
</dbReference>
<dbReference type="FunFam" id="3.90.79.10:FF:000003">
    <property type="entry name" value="M7GpppN-mRNA hydrolase isoform 2"/>
    <property type="match status" value="1"/>
</dbReference>
<dbReference type="FunFam" id="1.10.10.1050:FF:000002">
    <property type="entry name" value="mRNA-decapping enzyme subunit 2"/>
    <property type="match status" value="1"/>
</dbReference>
<dbReference type="Gene3D" id="1.10.10.1050">
    <property type="entry name" value="Dcp2, box A domain"/>
    <property type="match status" value="1"/>
</dbReference>
<dbReference type="Gene3D" id="3.90.79.10">
    <property type="entry name" value="Nucleoside Triphosphate Pyrophosphohydrolase"/>
    <property type="match status" value="1"/>
</dbReference>
<dbReference type="InterPro" id="IPR007722">
    <property type="entry name" value="DCP2_BoxA"/>
</dbReference>
<dbReference type="InterPro" id="IPR036189">
    <property type="entry name" value="DCP2_BoxA_sf"/>
</dbReference>
<dbReference type="InterPro" id="IPR044099">
    <property type="entry name" value="Dcp2_NUDIX"/>
</dbReference>
<dbReference type="InterPro" id="IPR015797">
    <property type="entry name" value="NUDIX_hydrolase-like_dom_sf"/>
</dbReference>
<dbReference type="InterPro" id="IPR020084">
    <property type="entry name" value="NUDIX_hydrolase_CS"/>
</dbReference>
<dbReference type="InterPro" id="IPR000086">
    <property type="entry name" value="NUDIX_hydrolase_dom"/>
</dbReference>
<dbReference type="PANTHER" id="PTHR23114">
    <property type="entry name" value="M7GPPPN-MRNA HYDROLASE"/>
    <property type="match status" value="1"/>
</dbReference>
<dbReference type="PANTHER" id="PTHR23114:SF17">
    <property type="entry name" value="M7GPPPN-MRNA HYDROLASE"/>
    <property type="match status" value="1"/>
</dbReference>
<dbReference type="Pfam" id="PF05026">
    <property type="entry name" value="DCP2"/>
    <property type="match status" value="1"/>
</dbReference>
<dbReference type="Pfam" id="PF00293">
    <property type="entry name" value="NUDIX"/>
    <property type="match status" value="1"/>
</dbReference>
<dbReference type="SMART" id="SM01125">
    <property type="entry name" value="DCP2"/>
    <property type="match status" value="1"/>
</dbReference>
<dbReference type="SUPFAM" id="SSF140586">
    <property type="entry name" value="Dcp2 domain-like"/>
    <property type="match status" value="1"/>
</dbReference>
<dbReference type="SUPFAM" id="SSF55811">
    <property type="entry name" value="Nudix"/>
    <property type="match status" value="1"/>
</dbReference>
<dbReference type="PROSITE" id="PS51462">
    <property type="entry name" value="NUDIX"/>
    <property type="match status" value="1"/>
</dbReference>
<dbReference type="PROSITE" id="PS00893">
    <property type="entry name" value="NUDIX_BOX"/>
    <property type="match status" value="1"/>
</dbReference>
<proteinExistence type="evidence at protein level"/>
<name>DCP2_ARATH</name>
<organism>
    <name type="scientific">Arabidopsis thaliana</name>
    <name type="common">Mouse-ear cress</name>
    <dbReference type="NCBI Taxonomy" id="3702"/>
    <lineage>
        <taxon>Eukaryota</taxon>
        <taxon>Viridiplantae</taxon>
        <taxon>Streptophyta</taxon>
        <taxon>Embryophyta</taxon>
        <taxon>Tracheophyta</taxon>
        <taxon>Spermatophyta</taxon>
        <taxon>Magnoliopsida</taxon>
        <taxon>eudicotyledons</taxon>
        <taxon>Gunneridae</taxon>
        <taxon>Pentapetalae</taxon>
        <taxon>rosids</taxon>
        <taxon>malvids</taxon>
        <taxon>Brassicales</taxon>
        <taxon>Brassicaceae</taxon>
        <taxon>Camelineae</taxon>
        <taxon>Arabidopsis</taxon>
    </lineage>
</organism>
<feature type="chain" id="PRO_0000418336" description="mRNA-decapping enzyme subunit 2">
    <location>
        <begin position="1"/>
        <end position="373"/>
    </location>
</feature>
<feature type="domain" description="Nudix hydrolase" evidence="2">
    <location>
        <begin position="106"/>
        <end position="234"/>
    </location>
</feature>
<feature type="region of interest" description="RNA binding">
    <location>
        <begin position="233"/>
        <end position="250"/>
    </location>
</feature>
<feature type="region of interest" description="Disordered" evidence="3">
    <location>
        <begin position="275"/>
        <end position="342"/>
    </location>
</feature>
<feature type="short sequence motif" description="Nudix box">
    <location>
        <begin position="139"/>
        <end position="160"/>
    </location>
</feature>
<feature type="short sequence motif" description="PDZ-binding">
    <location>
        <begin position="370"/>
        <end position="373"/>
    </location>
</feature>
<feature type="compositionally biased region" description="Basic and acidic residues" evidence="3">
    <location>
        <begin position="298"/>
        <end position="323"/>
    </location>
</feature>
<feature type="compositionally biased region" description="Polar residues" evidence="3">
    <location>
        <begin position="324"/>
        <end position="334"/>
    </location>
</feature>
<feature type="binding site" evidence="1">
    <location>
        <position position="154"/>
    </location>
    <ligand>
        <name>Mg(2+)</name>
        <dbReference type="ChEBI" id="CHEBI:18420"/>
    </ligand>
</feature>
<feature type="binding site" evidence="1">
    <location>
        <position position="158"/>
    </location>
    <ligand>
        <name>Mg(2+)</name>
        <dbReference type="ChEBI" id="CHEBI:18420"/>
    </ligand>
</feature>
<feature type="binding site" evidence="1">
    <location>
        <position position="178"/>
    </location>
    <ligand>
        <name>ATP</name>
        <dbReference type="ChEBI" id="CHEBI:30616"/>
    </ligand>
</feature>
<feature type="binding site" evidence="1">
    <location>
        <position position="233"/>
    </location>
    <ligand>
        <name>ATP</name>
        <dbReference type="ChEBI" id="CHEBI:30616"/>
    </ligand>
</feature>
<feature type="splice variant" id="VSP_044026" description="In isoform 2." evidence="9">
    <original>E</original>
    <variation>ELSSAILLVNVAFQ</variation>
    <location>
        <position position="154"/>
    </location>
</feature>
<feature type="mutagenesis site" description="Loss of mRNA decaping activity." evidence="7">
    <original>E</original>
    <variation>Q</variation>
    <location>
        <position position="154"/>
    </location>
</feature>
<feature type="mutagenesis site" description="Loss of mRNA decaping activity." evidence="4 7">
    <original>E</original>
    <variation>Q</variation>
    <location>
        <position position="158"/>
    </location>
</feature>
<feature type="mutagenesis site" description="Loss of mRNA decaping activity." evidence="7">
    <location>
        <begin position="222"/>
        <end position="232"/>
    </location>
</feature>
<feature type="mutagenesis site" description="Reduced mRNA decaping activity." evidence="7">
    <original>G</original>
    <variation>A</variation>
    <location>
        <position position="226"/>
    </location>
</feature>
<feature type="mutagenesis site" description="Reduced mRNA decaping activity." evidence="7">
    <original>K</original>
    <variation>A</variation>
    <location>
        <position position="231"/>
    </location>
</feature>
<feature type="mutagenesis site" description="Reduced mRNA decaping activity." evidence="7">
    <original>K</original>
    <variation>A</variation>
    <location>
        <position position="243"/>
    </location>
</feature>
<feature type="mutagenesis site" description="Reduced mRNA decaping activity." evidence="7">
    <original>K</original>
    <variation>A</variation>
    <location>
        <position position="248"/>
    </location>
</feature>
<feature type="mutagenesis site" description="Enhanced stability due do reduced proteolysis." evidence="7">
    <original>SA</original>
    <variation>PD</variation>
    <location>
        <begin position="372"/>
        <end position="373"/>
    </location>
</feature>
<reference key="1">
    <citation type="journal article" date="1997" name="DNA Res.">
        <title>Structural analysis of Arabidopsis thaliana chromosome 5. II. Sequence features of the regions of 1,044,062 bp covered by thirteen physically assigned P1 clones.</title>
        <authorList>
            <person name="Kotani H."/>
            <person name="Nakamura Y."/>
            <person name="Sato S."/>
            <person name="Kaneko T."/>
            <person name="Asamizu E."/>
            <person name="Miyajima N."/>
            <person name="Tabata S."/>
        </authorList>
    </citation>
    <scope>NUCLEOTIDE SEQUENCE [LARGE SCALE GENOMIC DNA]</scope>
    <source>
        <strain>cv. Columbia</strain>
    </source>
</reference>
<reference key="2">
    <citation type="journal article" date="2017" name="Plant J.">
        <title>Araport11: a complete reannotation of the Arabidopsis thaliana reference genome.</title>
        <authorList>
            <person name="Cheng C.Y."/>
            <person name="Krishnakumar V."/>
            <person name="Chan A.P."/>
            <person name="Thibaud-Nissen F."/>
            <person name="Schobel S."/>
            <person name="Town C.D."/>
        </authorList>
    </citation>
    <scope>GENOME REANNOTATION</scope>
    <source>
        <strain>cv. Columbia</strain>
    </source>
</reference>
<reference key="3">
    <citation type="journal article" date="2002" name="Science">
        <title>Functional annotation of a full-length Arabidopsis cDNA collection.</title>
        <authorList>
            <person name="Seki M."/>
            <person name="Narusaka M."/>
            <person name="Kamiya A."/>
            <person name="Ishida J."/>
            <person name="Satou M."/>
            <person name="Sakurai T."/>
            <person name="Nakajima M."/>
            <person name="Enju A."/>
            <person name="Akiyama K."/>
            <person name="Oono Y."/>
            <person name="Muramatsu M."/>
            <person name="Hayashizaki Y."/>
            <person name="Kawai J."/>
            <person name="Carninci P."/>
            <person name="Itoh M."/>
            <person name="Ishii Y."/>
            <person name="Arakawa T."/>
            <person name="Shibata K."/>
            <person name="Shinagawa A."/>
            <person name="Shinozaki K."/>
        </authorList>
    </citation>
    <scope>NUCLEOTIDE SEQUENCE [LARGE SCALE MRNA] (ISOFORM 1)</scope>
    <source>
        <strain>cv. Columbia</strain>
    </source>
</reference>
<reference key="4">
    <citation type="journal article" date="2003" name="Science">
        <title>Empirical analysis of transcriptional activity in the Arabidopsis genome.</title>
        <authorList>
            <person name="Yamada K."/>
            <person name="Lim J."/>
            <person name="Dale J.M."/>
            <person name="Chen H."/>
            <person name="Shinn P."/>
            <person name="Palm C.J."/>
            <person name="Southwick A.M."/>
            <person name="Wu H.C."/>
            <person name="Kim C.J."/>
            <person name="Nguyen M."/>
            <person name="Pham P.K."/>
            <person name="Cheuk R.F."/>
            <person name="Karlin-Newmann G."/>
            <person name="Liu S.X."/>
            <person name="Lam B."/>
            <person name="Sakano H."/>
            <person name="Wu T."/>
            <person name="Yu G."/>
            <person name="Miranda M."/>
            <person name="Quach H.L."/>
            <person name="Tripp M."/>
            <person name="Chang C.H."/>
            <person name="Lee J.M."/>
            <person name="Toriumi M.J."/>
            <person name="Chan M.M."/>
            <person name="Tang C.C."/>
            <person name="Onodera C.S."/>
            <person name="Deng J.M."/>
            <person name="Akiyama K."/>
            <person name="Ansari Y."/>
            <person name="Arakawa T."/>
            <person name="Banh J."/>
            <person name="Banno F."/>
            <person name="Bowser L."/>
            <person name="Brooks S.Y."/>
            <person name="Carninci P."/>
            <person name="Chao Q."/>
            <person name="Choy N."/>
            <person name="Enju A."/>
            <person name="Goldsmith A.D."/>
            <person name="Gurjal M."/>
            <person name="Hansen N.F."/>
            <person name="Hayashizaki Y."/>
            <person name="Johnson-Hopson C."/>
            <person name="Hsuan V.W."/>
            <person name="Iida K."/>
            <person name="Karnes M."/>
            <person name="Khan S."/>
            <person name="Koesema E."/>
            <person name="Ishida J."/>
            <person name="Jiang P.X."/>
            <person name="Jones T."/>
            <person name="Kawai J."/>
            <person name="Kamiya A."/>
            <person name="Meyers C."/>
            <person name="Nakajima M."/>
            <person name="Narusaka M."/>
            <person name="Seki M."/>
            <person name="Sakurai T."/>
            <person name="Satou M."/>
            <person name="Tamse R."/>
            <person name="Vaysberg M."/>
            <person name="Wallender E.K."/>
            <person name="Wong C."/>
            <person name="Yamamura Y."/>
            <person name="Yuan S."/>
            <person name="Shinozaki K."/>
            <person name="Davis R.W."/>
            <person name="Theologis A."/>
            <person name="Ecker J.R."/>
        </authorList>
    </citation>
    <scope>NUCLEOTIDE SEQUENCE [LARGE SCALE MRNA] (ISOFORM 1)</scope>
    <source>
        <strain>cv. Columbia</strain>
    </source>
</reference>
<reference key="5">
    <citation type="journal article" date="2006" name="Plant Cell">
        <title>Arabidopsis DCP2, DCP1, and VARICOSE form a decapping complex required for postembryonic development.</title>
        <authorList>
            <person name="Xu J."/>
            <person name="Yang J.-Y."/>
            <person name="Niu Q.-W."/>
            <person name="Chua N.-H."/>
        </authorList>
    </citation>
    <scope>FUNCTION</scope>
    <scope>SUBCELLULAR LOCATION</scope>
    <scope>INTERACTION WITH DCP1 AND VCS</scope>
    <scope>TISSUE SPECIFICITY</scope>
    <scope>DISRUPTION PHENOTYPE</scope>
    <scope>MUTAGENESIS OF GLU-158</scope>
</reference>
<reference key="6">
    <citation type="journal article" date="2007" name="FEBS Lett.">
        <title>Characterization of Arabidopsis decapping proteins AtDCP1 and AtDCP2, which are essential for post-embryonic development.</title>
        <authorList>
            <person name="Iwasaki S."/>
            <person name="Takeda A."/>
            <person name="Motose H."/>
            <person name="Watanabe Y."/>
        </authorList>
    </citation>
    <scope>FUNCTION</scope>
    <scope>SUBCELLULAR LOCATION</scope>
    <source>
        <strain>cv. Columbia</strain>
    </source>
</reference>
<reference key="7">
    <citation type="journal article" date="2007" name="Plant Cell">
        <title>Components of the Arabidopsis mRNA decapping complex are required for early seedling development.</title>
        <authorList>
            <person name="Goeres D.C."/>
            <person name="Van Norman J.M."/>
            <person name="Zhang W."/>
            <person name="Fauver N.A."/>
            <person name="Spencer M.L."/>
            <person name="Sieburth L.E."/>
        </authorList>
    </citation>
    <scope>FUNCTION</scope>
    <scope>SUBCELLULAR LOCATION</scope>
    <scope>DISRUPTION PHENOTYPE</scope>
    <scope>INTERACTION WITH VCS</scope>
    <scope>HOMODIMER</scope>
    <source>
        <strain>cv. Columbia</strain>
    </source>
</reference>
<reference key="8">
    <citation type="journal article" date="2008" name="Nucleic Acids Res.">
        <title>Identification of functional domains in Arabidopsis thaliana mRNA decapping enzyme (AtDcp2).</title>
        <authorList>
            <person name="Gunawardana D."/>
            <person name="Cheng H.-C."/>
            <person name="Gayler K.R."/>
        </authorList>
    </citation>
    <scope>CATALYTIC ACTIVITY</scope>
    <scope>FUNCTION</scope>
    <scope>COFACTOR</scope>
    <scope>ACTIVITY REGULATION</scope>
    <scope>MUTAGENESIS OF GLU-154; GLU-158; 222-VAL--LEU-232; GLY-226; LYS-231; LYS-243; LYS-248 AND 372-SER-ALA-373</scope>
    <scope>PDZ DOMAIN-BINDING</scope>
    <source>
        <strain>cv. Columbia</strain>
    </source>
</reference>
<reference key="9">
    <citation type="journal article" date="2009" name="Plant Cell">
        <title>Arabidopsis decapping 5 is required for mRNA decapping, P-body formation, and translational repression during postembryonic development.</title>
        <authorList>
            <person name="Xu J."/>
            <person name="Chua N.-H."/>
        </authorList>
    </citation>
    <scope>INTERACTION WITH DCP5</scope>
    <scope>DEVELOPMENTAL STAGE</scope>
</reference>
<accession>Q8GW31</accession>
<accession>F4K3Z9</accession>
<accession>Q9FNB6</accession>
<protein>
    <recommendedName>
        <fullName>mRNA-decapping enzyme subunit 2</fullName>
        <shortName>AtDCP2</shortName>
        <shortName>Protein DECAPPING 2</shortName>
        <ecNumber evidence="7">3.6.1.62</ecNumber>
    </recommendedName>
    <alternativeName>
        <fullName>M(7)GpppN-mRNA hydrolase DCP2</fullName>
    </alternativeName>
    <alternativeName>
        <fullName>Protein TRIDENT</fullName>
    </alternativeName>
</protein>
<comment type="function">
    <text evidence="4 5 6 7">Catalytic component of the decapping complex necessary for the degradation of mRNAs, both in normal mRNA turnover and in nonsense-mediated mRNA decay. Removes the 7-methyl guanine cap structure from mRNA molecules, yielding a 5'-phosphorylated mRNA fragment and 7m-GDP. Essential for postembryonic development, especially during the formation of the shoot apical meristem (SAM).</text>
</comment>
<comment type="catalytic activity">
    <reaction evidence="7">
        <text>a 5'-end (N(7)-methyl 5'-triphosphoguanosine)-ribonucleoside in mRNA + H2O = N(7)-methyl-GDP + a 5'-end phospho-ribonucleoside in mRNA + 2 H(+)</text>
        <dbReference type="Rhea" id="RHEA:67484"/>
        <dbReference type="Rhea" id="RHEA-COMP:15692"/>
        <dbReference type="Rhea" id="RHEA-COMP:17167"/>
        <dbReference type="ChEBI" id="CHEBI:15377"/>
        <dbReference type="ChEBI" id="CHEBI:15378"/>
        <dbReference type="ChEBI" id="CHEBI:63714"/>
        <dbReference type="ChEBI" id="CHEBI:138282"/>
        <dbReference type="ChEBI" id="CHEBI:156461"/>
        <dbReference type="EC" id="3.6.1.62"/>
    </reaction>
    <physiologicalReaction direction="left-to-right" evidence="7">
        <dbReference type="Rhea" id="RHEA:67485"/>
    </physiologicalReaction>
</comment>
<comment type="cofactor">
    <cofactor evidence="7">
        <name>Mn(2+)</name>
        <dbReference type="ChEBI" id="CHEBI:29035"/>
    </cofactor>
    <cofactor evidence="7">
        <name>Mg(2+)</name>
        <dbReference type="ChEBI" id="CHEBI:18420"/>
    </cofactor>
</comment>
<comment type="activity regulation">
    <text evidence="7">Inhibited by the product 7-methyl GDP.</text>
</comment>
<comment type="subunit">
    <text evidence="4 6 8">Homodimer. Catalytic component of the decapping complex. Interacts with DCP1, DCP5 and VCS.</text>
</comment>
<comment type="interaction">
    <interactant intactId="EBI-4425465">
        <id>Q8GW31</id>
    </interactant>
    <interactant intactId="EBI-7786643">
        <id>Q9SJF3</id>
        <label>At1g08370</label>
    </interactant>
    <organismsDiffer>false</organismsDiffer>
    <experiments>2</experiments>
</comment>
<comment type="subcellular location">
    <subcellularLocation>
        <location evidence="4 5 6">Cytoplasm</location>
        <location evidence="4 5 6">P-body</location>
    </subcellularLocation>
    <text>The localization to P-body is VCS-dependent.</text>
</comment>
<comment type="alternative products">
    <event type="alternative splicing"/>
    <isoform>
        <id>Q8GW31-1</id>
        <name>1</name>
        <sequence type="displayed"/>
    </isoform>
    <isoform>
        <id>Q8GW31-2</id>
        <name>2</name>
        <sequence type="described" ref="VSP_044026"/>
    </isoform>
</comment>
<comment type="tissue specificity">
    <text evidence="4">Expressed in seedlings, mostly in root tips, root hairs, and the vascular system. Also present in roots, leaves, stems, and flowers.</text>
</comment>
<comment type="developmental stage">
    <text evidence="8">Gradually accumulates upon germination.</text>
</comment>
<comment type="disruption phenotype">
    <text evidence="4 6">Lethal phenotype at the seedling cotyledon stage that are small and chlorotic, with disorganized veins, swollen root hairs, and altered epidermal cell morphology. Altered RNA decay.</text>
</comment>
<comment type="similarity">
    <text evidence="9">Belongs to the Nudix hydrolase family. DCP2 subfamily.</text>
</comment>
<comment type="sequence caution" evidence="9">
    <conflict type="erroneous gene model prediction">
        <sequence resource="EMBL-CDS" id="BAB08683"/>
    </conflict>
</comment>
<evidence type="ECO:0000250" key="1"/>
<evidence type="ECO:0000255" key="2">
    <source>
        <dbReference type="PROSITE-ProRule" id="PRU00794"/>
    </source>
</evidence>
<evidence type="ECO:0000256" key="3">
    <source>
        <dbReference type="SAM" id="MobiDB-lite"/>
    </source>
</evidence>
<evidence type="ECO:0000269" key="4">
    <source>
    </source>
</evidence>
<evidence type="ECO:0000269" key="5">
    <source>
    </source>
</evidence>
<evidence type="ECO:0000269" key="6">
    <source>
    </source>
</evidence>
<evidence type="ECO:0000269" key="7">
    <source>
    </source>
</evidence>
<evidence type="ECO:0000269" key="8">
    <source>
    </source>
</evidence>
<evidence type="ECO:0000305" key="9"/>
<gene>
    <name type="primary">DCP2</name>
    <name type="synonym">TDT</name>
    <name type="ordered locus">At5g13570</name>
    <name type="ORF">MSH12.3</name>
</gene>
<keyword id="KW-0025">Alternative splicing</keyword>
<keyword id="KW-0067">ATP-binding</keyword>
<keyword id="KW-0963">Cytoplasm</keyword>
<keyword id="KW-0378">Hydrolase</keyword>
<keyword id="KW-0460">Magnesium</keyword>
<keyword id="KW-0464">Manganese</keyword>
<keyword id="KW-0479">Metal-binding</keyword>
<keyword id="KW-0507">mRNA processing</keyword>
<keyword id="KW-0547">Nucleotide-binding</keyword>
<keyword id="KW-1185">Reference proteome</keyword>
<keyword id="KW-0694">RNA-binding</keyword>